<gene>
    <name type="primary">Nup54</name>
</gene>
<evidence type="ECO:0000269" key="1">
    <source>
    </source>
</evidence>
<evidence type="ECO:0000305" key="2"/>
<evidence type="ECO:0007829" key="3">
    <source>
        <dbReference type="PDB" id="3T97"/>
    </source>
</evidence>
<evidence type="ECO:0007829" key="4">
    <source>
        <dbReference type="PDB" id="4J3H"/>
    </source>
</evidence>
<comment type="function">
    <text evidence="1">Component of the nuclear pore complex, a complex required for the trafficking across the nuclear membrane.</text>
</comment>
<comment type="subunit">
    <text evidence="1">Component of the p62 complex, a complex composed of NUP62, NUP54, and the isoform p58 and isoform p45 of NUP58. Interacts with NUTF2.</text>
</comment>
<comment type="subcellular location">
    <subcellularLocation>
        <location evidence="1">Nucleus</location>
        <location evidence="1">Nuclear pore complex</location>
    </subcellularLocation>
    <subcellularLocation>
        <location evidence="1">Nucleus membrane</location>
        <topology evidence="1">Peripheral membrane protein</topology>
        <orientation evidence="1">Cytoplasmic side</orientation>
    </subcellularLocation>
    <subcellularLocation>
        <location evidence="1">Nucleus membrane</location>
        <topology evidence="1">Peripheral membrane protein</topology>
        <orientation evidence="1">Nucleoplasmic side</orientation>
    </subcellularLocation>
    <text>Biased towards cytoplasmic side. Central region of the nuclear pore complex, within the transporter.</text>
</comment>
<comment type="domain">
    <text>Contains FG repeats.</text>
</comment>
<comment type="PTM">
    <text>O-glycosylated.</text>
</comment>
<comment type="similarity">
    <text evidence="2">Belongs to the NUP54 family.</text>
</comment>
<accession>P70582</accession>
<dbReference type="EMBL" id="U63840">
    <property type="protein sequence ID" value="AAC52790.1"/>
    <property type="molecule type" value="mRNA"/>
</dbReference>
<dbReference type="EMBL" id="BC078858">
    <property type="protein sequence ID" value="AAH78858.1"/>
    <property type="molecule type" value="mRNA"/>
</dbReference>
<dbReference type="RefSeq" id="NP_059057.1">
    <property type="nucleotide sequence ID" value="NM_017361.2"/>
</dbReference>
<dbReference type="PDB" id="3T97">
    <property type="method" value="X-ray"/>
    <property type="resolution" value="2.80 A"/>
    <property type="chains" value="B=346-407"/>
</dbReference>
<dbReference type="PDB" id="3T98">
    <property type="method" value="X-ray"/>
    <property type="resolution" value="2.50 A"/>
    <property type="chains" value="A/C=445-494"/>
</dbReference>
<dbReference type="PDB" id="4J3H">
    <property type="method" value="X-ray"/>
    <property type="resolution" value="1.50 A"/>
    <property type="chains" value="A/B=453-494"/>
</dbReference>
<dbReference type="PDBsum" id="3T97"/>
<dbReference type="PDBsum" id="3T98"/>
<dbReference type="PDBsum" id="4J3H"/>
<dbReference type="SMR" id="P70582"/>
<dbReference type="BioGRID" id="248440">
    <property type="interactions" value="2"/>
</dbReference>
<dbReference type="CORUM" id="P70582"/>
<dbReference type="FunCoup" id="P70582">
    <property type="interactions" value="4801"/>
</dbReference>
<dbReference type="STRING" id="10116.ENSRNOP00000003070"/>
<dbReference type="GlyGen" id="P70582">
    <property type="glycosylation" value="1 site, 1 O-linked glycan (1 site)"/>
</dbReference>
<dbReference type="PhosphoSitePlus" id="P70582"/>
<dbReference type="jPOST" id="P70582"/>
<dbReference type="PaxDb" id="10116-ENSRNOP00000003070"/>
<dbReference type="Ensembl" id="ENSRNOT00000003070.6">
    <property type="protein sequence ID" value="ENSRNOP00000003070.3"/>
    <property type="gene ID" value="ENSRNOG00000002247.6"/>
</dbReference>
<dbReference type="GeneID" id="53372"/>
<dbReference type="KEGG" id="rno:53372"/>
<dbReference type="UCSC" id="RGD:619926">
    <property type="organism name" value="rat"/>
</dbReference>
<dbReference type="AGR" id="RGD:619926"/>
<dbReference type="CTD" id="53371"/>
<dbReference type="RGD" id="619926">
    <property type="gene designation" value="Nup54"/>
</dbReference>
<dbReference type="eggNOG" id="KOG3091">
    <property type="taxonomic scope" value="Eukaryota"/>
</dbReference>
<dbReference type="GeneTree" id="ENSGT00390000013620"/>
<dbReference type="HOGENOM" id="CLU_033371_0_0_1"/>
<dbReference type="InParanoid" id="P70582"/>
<dbReference type="OMA" id="MMQTRLH"/>
<dbReference type="OrthoDB" id="6162375at2759"/>
<dbReference type="PhylomeDB" id="P70582"/>
<dbReference type="TreeFam" id="TF320237"/>
<dbReference type="Reactome" id="R-RNO-159227">
    <property type="pathway name" value="Transport of the SLBP independent Mature mRNA"/>
</dbReference>
<dbReference type="Reactome" id="R-RNO-159230">
    <property type="pathway name" value="Transport of the SLBP Dependant Mature mRNA"/>
</dbReference>
<dbReference type="Reactome" id="R-RNO-159231">
    <property type="pathway name" value="Transport of Mature mRNA Derived from an Intronless Transcript"/>
</dbReference>
<dbReference type="Reactome" id="R-RNO-159236">
    <property type="pathway name" value="Transport of Mature mRNA derived from an Intron-Containing Transcript"/>
</dbReference>
<dbReference type="Reactome" id="R-RNO-170822">
    <property type="pathway name" value="Regulation of Glucokinase by Glucokinase Regulatory Protein"/>
</dbReference>
<dbReference type="Reactome" id="R-RNO-191859">
    <property type="pathway name" value="snRNP Assembly"/>
</dbReference>
<dbReference type="Reactome" id="R-RNO-3108214">
    <property type="pathway name" value="SUMOylation of DNA damage response and repair proteins"/>
</dbReference>
<dbReference type="Reactome" id="R-RNO-3232142">
    <property type="pathway name" value="SUMOylation of ubiquitinylation proteins"/>
</dbReference>
<dbReference type="Reactome" id="R-RNO-3301854">
    <property type="pathway name" value="Nuclear Pore Complex (NPC) Disassembly"/>
</dbReference>
<dbReference type="Reactome" id="R-RNO-3371453">
    <property type="pathway name" value="Regulation of HSF1-mediated heat shock response"/>
</dbReference>
<dbReference type="Reactome" id="R-RNO-4085377">
    <property type="pathway name" value="SUMOylation of SUMOylation proteins"/>
</dbReference>
<dbReference type="Reactome" id="R-RNO-4551638">
    <property type="pathway name" value="SUMOylation of chromatin organization proteins"/>
</dbReference>
<dbReference type="Reactome" id="R-RNO-4570464">
    <property type="pathway name" value="SUMOylation of RNA binding proteins"/>
</dbReference>
<dbReference type="Reactome" id="R-RNO-4615885">
    <property type="pathway name" value="SUMOylation of DNA replication proteins"/>
</dbReference>
<dbReference type="Reactome" id="R-RNO-5578749">
    <property type="pathway name" value="Transcriptional regulation by small RNAs"/>
</dbReference>
<dbReference type="EvolutionaryTrace" id="P70582"/>
<dbReference type="PRO" id="PR:P70582"/>
<dbReference type="Proteomes" id="UP000002494">
    <property type="component" value="Chromosome 14"/>
</dbReference>
<dbReference type="Bgee" id="ENSRNOG00000002247">
    <property type="expression patterns" value="Expressed in thymus and 19 other cell types or tissues"/>
</dbReference>
<dbReference type="GO" id="GO:0005635">
    <property type="term" value="C:nuclear envelope"/>
    <property type="evidence" value="ECO:0000314"/>
    <property type="project" value="RGD"/>
</dbReference>
<dbReference type="GO" id="GO:0031965">
    <property type="term" value="C:nuclear membrane"/>
    <property type="evidence" value="ECO:0007669"/>
    <property type="project" value="UniProtKB-SubCell"/>
</dbReference>
<dbReference type="GO" id="GO:0005643">
    <property type="term" value="C:nuclear pore"/>
    <property type="evidence" value="ECO:0000314"/>
    <property type="project" value="UniProtKB"/>
</dbReference>
<dbReference type="GO" id="GO:0044613">
    <property type="term" value="C:nuclear pore central transport channel"/>
    <property type="evidence" value="ECO:0000318"/>
    <property type="project" value="GO_Central"/>
</dbReference>
<dbReference type="GO" id="GO:0032991">
    <property type="term" value="C:protein-containing complex"/>
    <property type="evidence" value="ECO:0000314"/>
    <property type="project" value="RGD"/>
</dbReference>
<dbReference type="GO" id="GO:0042802">
    <property type="term" value="F:identical protein binding"/>
    <property type="evidence" value="ECO:0000353"/>
    <property type="project" value="RGD"/>
</dbReference>
<dbReference type="GO" id="GO:0044877">
    <property type="term" value="F:protein-containing complex binding"/>
    <property type="evidence" value="ECO:0000314"/>
    <property type="project" value="RGD"/>
</dbReference>
<dbReference type="GO" id="GO:0017056">
    <property type="term" value="F:structural constituent of nuclear pore"/>
    <property type="evidence" value="ECO:0000314"/>
    <property type="project" value="UniProtKB"/>
</dbReference>
<dbReference type="GO" id="GO:0051028">
    <property type="term" value="P:mRNA transport"/>
    <property type="evidence" value="ECO:0007669"/>
    <property type="project" value="UniProtKB-KW"/>
</dbReference>
<dbReference type="GO" id="GO:0006607">
    <property type="term" value="P:NLS-bearing protein import into nucleus"/>
    <property type="evidence" value="ECO:0000318"/>
    <property type="project" value="GO_Central"/>
</dbReference>
<dbReference type="GO" id="GO:0006999">
    <property type="term" value="P:nuclear pore organization"/>
    <property type="evidence" value="ECO:0000318"/>
    <property type="project" value="GO_Central"/>
</dbReference>
<dbReference type="GO" id="GO:0006913">
    <property type="term" value="P:nucleocytoplasmic transport"/>
    <property type="evidence" value="ECO:0000314"/>
    <property type="project" value="UniProtKB"/>
</dbReference>
<dbReference type="GO" id="GO:0036228">
    <property type="term" value="P:protein localization to nuclear inner membrane"/>
    <property type="evidence" value="ECO:0000318"/>
    <property type="project" value="GO_Central"/>
</dbReference>
<dbReference type="GO" id="GO:0006605">
    <property type="term" value="P:protein targeting"/>
    <property type="evidence" value="ECO:0000314"/>
    <property type="project" value="UniProtKB"/>
</dbReference>
<dbReference type="GO" id="GO:0042306">
    <property type="term" value="P:regulation of protein import into nucleus"/>
    <property type="evidence" value="ECO:0000314"/>
    <property type="project" value="RGD"/>
</dbReference>
<dbReference type="FunFam" id="1.20.5.490:FF:000003">
    <property type="entry name" value="nucleoporin p54 isoform X1"/>
    <property type="match status" value="1"/>
</dbReference>
<dbReference type="FunFam" id="1.20.5.170:FF:000034">
    <property type="entry name" value="Nucleoporin P54, putative"/>
    <property type="match status" value="1"/>
</dbReference>
<dbReference type="Gene3D" id="1.20.5.170">
    <property type="match status" value="1"/>
</dbReference>
<dbReference type="Gene3D" id="1.20.5.490">
    <property type="entry name" value="Single helix bin"/>
    <property type="match status" value="1"/>
</dbReference>
<dbReference type="InterPro" id="IPR024864">
    <property type="entry name" value="Nup54/Nup57/Nup44"/>
</dbReference>
<dbReference type="InterPro" id="IPR025712">
    <property type="entry name" value="Nup54_alpha-helical_dom"/>
</dbReference>
<dbReference type="InterPro" id="IPR040985">
    <property type="entry name" value="Nup54_C"/>
</dbReference>
<dbReference type="PANTHER" id="PTHR13000">
    <property type="entry name" value="NUCLEOPORIN P54"/>
    <property type="match status" value="1"/>
</dbReference>
<dbReference type="PANTHER" id="PTHR13000:SF0">
    <property type="entry name" value="NUCLEOPORIN P54"/>
    <property type="match status" value="1"/>
</dbReference>
<dbReference type="Pfam" id="PF13874">
    <property type="entry name" value="Nup54"/>
    <property type="match status" value="1"/>
</dbReference>
<dbReference type="Pfam" id="PF18437">
    <property type="entry name" value="Nup54_C"/>
    <property type="match status" value="1"/>
</dbReference>
<sequence>MAFNFGAPSGTSGTSTATAAPAGGFGGFGTTTTTAGSAFSFSAPTNTGSTGLLGGTQNKGFGFGTGFGTSTGTGTGLGTGLGTGLGFGGFNTQQQQQQQQTSLGGLFSQPAQAPAQSNQLINTASALSAPTLLGDERDAILAKWNQLQAFWGTGKGYFNNNIPPVEFTQENPFCRFKAVGYSCMPNNKDEDGLVVLIFNKKETDIRSQQQQLVESLHKVLGGNQTLTVNVEGIKTLPDDQTEVVIYIVERSPNGTSRRVPATTLYAHFEQANIKTQLQQLGVTLSMTRTELSPAQIKQLLQNPPAGVDPIIWEQAKVDNPDSEKLIPVPMVGFKELLRRLKVQDQMTKQHQTRLDIISEDISELQKNQTTTMAKIAQYKRKLMDLSHRTLQVLIKQEIQRKSGYAIQAEEEQLRVQLDTIQGELNAPTQFKGRLNELMSQIRMQNHFGAVKSEEKYYIDADLLREIKQHLKQQQEGLSHLISIIKDDLEDIKLVEHGLNETIHSRGGVFS</sequence>
<name>NUP54_RAT</name>
<organism>
    <name type="scientific">Rattus norvegicus</name>
    <name type="common">Rat</name>
    <dbReference type="NCBI Taxonomy" id="10116"/>
    <lineage>
        <taxon>Eukaryota</taxon>
        <taxon>Metazoa</taxon>
        <taxon>Chordata</taxon>
        <taxon>Craniata</taxon>
        <taxon>Vertebrata</taxon>
        <taxon>Euteleostomi</taxon>
        <taxon>Mammalia</taxon>
        <taxon>Eutheria</taxon>
        <taxon>Euarchontoglires</taxon>
        <taxon>Glires</taxon>
        <taxon>Rodentia</taxon>
        <taxon>Myomorpha</taxon>
        <taxon>Muroidea</taxon>
        <taxon>Muridae</taxon>
        <taxon>Murinae</taxon>
        <taxon>Rattus</taxon>
    </lineage>
</organism>
<reference key="1">
    <citation type="journal article" date="1996" name="J. Cell Biol.">
        <title>Molecular and functional characterization of the p62 complex, an assembly of nuclear pore complex glycoproteins.</title>
        <authorList>
            <person name="Hu T."/>
            <person name="Guan T."/>
            <person name="Gerace L."/>
        </authorList>
    </citation>
    <scope>NUCLEOTIDE SEQUENCE [MRNA]</scope>
    <scope>PROTEIN SEQUENCE OF 219-234; 298-316; 354-365; 434-442 AND 456-464</scope>
    <scope>FUNCTION</scope>
    <scope>SUBCELLULAR LOCATION</scope>
    <scope>IDENTIFICATION IN A COMPLEX WITH NUP62 AND NUP58</scope>
    <scope>INTERACTION WITH NUTF2</scope>
    <source>
        <tissue>Macrophage</tissue>
    </source>
</reference>
<reference key="2">
    <citation type="journal article" date="2004" name="Genome Res.">
        <title>The status, quality, and expansion of the NIH full-length cDNA project: the Mammalian Gene Collection (MGC).</title>
        <authorList>
            <consortium name="The MGC Project Team"/>
        </authorList>
    </citation>
    <scope>NUCLEOTIDE SEQUENCE [LARGE SCALE MRNA]</scope>
    <source>
        <tissue>Testis</tissue>
    </source>
</reference>
<keyword id="KW-0002">3D-structure</keyword>
<keyword id="KW-0903">Direct protein sequencing</keyword>
<keyword id="KW-0325">Glycoprotein</keyword>
<keyword id="KW-0472">Membrane</keyword>
<keyword id="KW-0509">mRNA transport</keyword>
<keyword id="KW-0906">Nuclear pore complex</keyword>
<keyword id="KW-0539">Nucleus</keyword>
<keyword id="KW-0653">Protein transport</keyword>
<keyword id="KW-1185">Reference proteome</keyword>
<keyword id="KW-0677">Repeat</keyword>
<keyword id="KW-0811">Translocation</keyword>
<keyword id="KW-0813">Transport</keyword>
<feature type="chain" id="PRO_0000204876" description="Nuclear pore complex protein Nup54">
    <location>
        <begin position="1"/>
        <end position="510"/>
    </location>
</feature>
<feature type="repeat" description="1">
    <location>
        <begin position="5"/>
        <end position="6"/>
    </location>
</feature>
<feature type="repeat" description="2">
    <location>
        <begin position="25"/>
        <end position="26"/>
    </location>
</feature>
<feature type="repeat" description="3">
    <location>
        <begin position="28"/>
        <end position="29"/>
    </location>
</feature>
<feature type="repeat" description="4">
    <location>
        <begin position="61"/>
        <end position="62"/>
    </location>
</feature>
<feature type="repeat" description="5">
    <location>
        <begin position="63"/>
        <end position="64"/>
    </location>
</feature>
<feature type="repeat" description="6">
    <location>
        <begin position="67"/>
        <end position="68"/>
    </location>
</feature>
<feature type="repeat" description="7">
    <location>
        <begin position="87"/>
        <end position="88"/>
    </location>
</feature>
<feature type="repeat" description="8">
    <location>
        <begin position="447"/>
        <end position="448"/>
    </location>
</feature>
<feature type="region of interest" description="8 X 2 AA repeats of F-G">
    <location>
        <begin position="5"/>
        <end position="448"/>
    </location>
</feature>
<feature type="helix" evidence="3">
    <location>
        <begin position="347"/>
        <end position="401"/>
    </location>
</feature>
<feature type="helix" evidence="4">
    <location>
        <begin position="460"/>
        <end position="488"/>
    </location>
</feature>
<proteinExistence type="evidence at protein level"/>
<protein>
    <recommendedName>
        <fullName>Nuclear pore complex protein Nup54</fullName>
    </recommendedName>
    <alternativeName>
        <fullName>54 kDa nucleoporin</fullName>
    </alternativeName>
    <alternativeName>
        <fullName>Nucleoporin Nup54</fullName>
    </alternativeName>
</protein>